<comment type="function">
    <text evidence="2">Involved in autophagy in a nutritional condition dependent manner. The ATG1-ATG13 protein kinase complex regulates downstream events required for autophagosome enclosure and/or vacuolar delivery. Becomes a target of autophagy under nutrient starvation. Connects autophagy to plant nutritional status.</text>
</comment>
<comment type="subunit">
    <text evidence="2 3">Interacts with ATG1A (PubMed:21984698). Interacts with ATG11 and ATG101 (PubMed:24563201).</text>
</comment>
<comment type="subcellular location">
    <subcellularLocation>
        <location evidence="2">Cytoplasmic vesicle</location>
        <location evidence="2">Autophagosome</location>
    </subcellularLocation>
</comment>
<comment type="alternative products">
    <event type="alternative splicing"/>
    <isoform>
        <id>Q9SCK0-1</id>
        <name>1</name>
        <sequence type="displayed"/>
    </isoform>
    <text evidence="6">A number of isoforms are produced. According to EST sequences.</text>
</comment>
<comment type="PTM">
    <text evidence="2">Phosphorylated during nutrient starvation. Dephosphorylated in nutrient-rich conditions.</text>
</comment>
<comment type="disruption phenotype">
    <text evidence="2">No visible phenotype under normal growth conditions. The double mutant plants atg13a-1 and atg13b-2, or atg13a-2 and atg13b-2 are hypersensitive to nitrogen or carbon starvation and show early senescence.</text>
</comment>
<comment type="similarity">
    <text evidence="6">Belongs to the ATG13 family. Plant subfamily.</text>
</comment>
<reference key="1">
    <citation type="journal article" date="2000" name="Nature">
        <title>Sequence and analysis of chromosome 3 of the plant Arabidopsis thaliana.</title>
        <authorList>
            <person name="Salanoubat M."/>
            <person name="Lemcke K."/>
            <person name="Rieger M."/>
            <person name="Ansorge W."/>
            <person name="Unseld M."/>
            <person name="Fartmann B."/>
            <person name="Valle G."/>
            <person name="Bloecker H."/>
            <person name="Perez-Alonso M."/>
            <person name="Obermaier B."/>
            <person name="Delseny M."/>
            <person name="Boutry M."/>
            <person name="Grivell L.A."/>
            <person name="Mache R."/>
            <person name="Puigdomenech P."/>
            <person name="De Simone V."/>
            <person name="Choisne N."/>
            <person name="Artiguenave F."/>
            <person name="Robert C."/>
            <person name="Brottier P."/>
            <person name="Wincker P."/>
            <person name="Cattolico L."/>
            <person name="Weissenbach J."/>
            <person name="Saurin W."/>
            <person name="Quetier F."/>
            <person name="Schaefer M."/>
            <person name="Mueller-Auer S."/>
            <person name="Gabel C."/>
            <person name="Fuchs M."/>
            <person name="Benes V."/>
            <person name="Wurmbach E."/>
            <person name="Drzonek H."/>
            <person name="Erfle H."/>
            <person name="Jordan N."/>
            <person name="Bangert S."/>
            <person name="Wiedelmann R."/>
            <person name="Kranz H."/>
            <person name="Voss H."/>
            <person name="Holland R."/>
            <person name="Brandt P."/>
            <person name="Nyakatura G."/>
            <person name="Vezzi A."/>
            <person name="D'Angelo M."/>
            <person name="Pallavicini A."/>
            <person name="Toppo S."/>
            <person name="Simionati B."/>
            <person name="Conrad A."/>
            <person name="Hornischer K."/>
            <person name="Kauer G."/>
            <person name="Loehnert T.-H."/>
            <person name="Nordsiek G."/>
            <person name="Reichelt J."/>
            <person name="Scharfe M."/>
            <person name="Schoen O."/>
            <person name="Bargues M."/>
            <person name="Terol J."/>
            <person name="Climent J."/>
            <person name="Navarro P."/>
            <person name="Collado C."/>
            <person name="Perez-Perez A."/>
            <person name="Ottenwaelder B."/>
            <person name="Duchemin D."/>
            <person name="Cooke R."/>
            <person name="Laudie M."/>
            <person name="Berger-Llauro C."/>
            <person name="Purnelle B."/>
            <person name="Masuy D."/>
            <person name="de Haan M."/>
            <person name="Maarse A.C."/>
            <person name="Alcaraz J.-P."/>
            <person name="Cottet A."/>
            <person name="Casacuberta E."/>
            <person name="Monfort A."/>
            <person name="Argiriou A."/>
            <person name="Flores M."/>
            <person name="Liguori R."/>
            <person name="Vitale D."/>
            <person name="Mannhaupt G."/>
            <person name="Haase D."/>
            <person name="Schoof H."/>
            <person name="Rudd S."/>
            <person name="Zaccaria P."/>
            <person name="Mewes H.-W."/>
            <person name="Mayer K.F.X."/>
            <person name="Kaul S."/>
            <person name="Town C.D."/>
            <person name="Koo H.L."/>
            <person name="Tallon L.J."/>
            <person name="Jenkins J."/>
            <person name="Rooney T."/>
            <person name="Rizzo M."/>
            <person name="Walts A."/>
            <person name="Utterback T."/>
            <person name="Fujii C.Y."/>
            <person name="Shea T.P."/>
            <person name="Creasy T.H."/>
            <person name="Haas B."/>
            <person name="Maiti R."/>
            <person name="Wu D."/>
            <person name="Peterson J."/>
            <person name="Van Aken S."/>
            <person name="Pai G."/>
            <person name="Militscher J."/>
            <person name="Sellers P."/>
            <person name="Gill J.E."/>
            <person name="Feldblyum T.V."/>
            <person name="Preuss D."/>
            <person name="Lin X."/>
            <person name="Nierman W.C."/>
            <person name="Salzberg S.L."/>
            <person name="White O."/>
            <person name="Venter J.C."/>
            <person name="Fraser C.M."/>
            <person name="Kaneko T."/>
            <person name="Nakamura Y."/>
            <person name="Sato S."/>
            <person name="Kato T."/>
            <person name="Asamizu E."/>
            <person name="Sasamoto S."/>
            <person name="Kimura T."/>
            <person name="Idesawa K."/>
            <person name="Kawashima K."/>
            <person name="Kishida Y."/>
            <person name="Kiyokawa C."/>
            <person name="Kohara M."/>
            <person name="Matsumoto M."/>
            <person name="Matsuno A."/>
            <person name="Muraki A."/>
            <person name="Nakayama S."/>
            <person name="Nakazaki N."/>
            <person name="Shinpo S."/>
            <person name="Takeuchi C."/>
            <person name="Wada T."/>
            <person name="Watanabe A."/>
            <person name="Yamada M."/>
            <person name="Yasuda M."/>
            <person name="Tabata S."/>
        </authorList>
    </citation>
    <scope>NUCLEOTIDE SEQUENCE [LARGE SCALE GENOMIC DNA]</scope>
    <source>
        <strain>cv. Columbia</strain>
    </source>
</reference>
<reference key="2">
    <citation type="journal article" date="2017" name="Plant J.">
        <title>Araport11: a complete reannotation of the Arabidopsis thaliana reference genome.</title>
        <authorList>
            <person name="Cheng C.Y."/>
            <person name="Krishnakumar V."/>
            <person name="Chan A.P."/>
            <person name="Thibaud-Nissen F."/>
            <person name="Schobel S."/>
            <person name="Town C.D."/>
        </authorList>
    </citation>
    <scope>GENOME REANNOTATION</scope>
    <source>
        <strain>cv. Columbia</strain>
    </source>
</reference>
<reference key="3">
    <citation type="journal article" date="2009" name="DNA Res.">
        <title>Analysis of multiple occurrences of alternative splicing events in Arabidopsis thaliana using novel sequenced full-length cDNAs.</title>
        <authorList>
            <person name="Iida K."/>
            <person name="Fukami-Kobayashi K."/>
            <person name="Toyoda A."/>
            <person name="Sakaki Y."/>
            <person name="Kobayashi M."/>
            <person name="Seki M."/>
            <person name="Shinozaki K."/>
        </authorList>
    </citation>
    <scope>NUCLEOTIDE SEQUENCE [LARGE SCALE MRNA]</scope>
    <source>
        <strain>cv. Columbia</strain>
    </source>
</reference>
<reference key="4">
    <citation type="submission" date="2006-07" db="EMBL/GenBank/DDBJ databases">
        <title>Large-scale analysis of RIKEN Arabidopsis full-length (RAFL) cDNAs.</title>
        <authorList>
            <person name="Totoki Y."/>
            <person name="Seki M."/>
            <person name="Ishida J."/>
            <person name="Nakajima M."/>
            <person name="Enju A."/>
            <person name="Kamiya A."/>
            <person name="Narusaka M."/>
            <person name="Shin-i T."/>
            <person name="Nakagawa M."/>
            <person name="Sakamoto N."/>
            <person name="Oishi K."/>
            <person name="Kohara Y."/>
            <person name="Kobayashi M."/>
            <person name="Toyoda A."/>
            <person name="Sakaki Y."/>
            <person name="Sakurai T."/>
            <person name="Iida K."/>
            <person name="Akiyama K."/>
            <person name="Satou M."/>
            <person name="Toyoda T."/>
            <person name="Konagaya A."/>
            <person name="Carninci P."/>
            <person name="Kawai J."/>
            <person name="Hayashizaki Y."/>
            <person name="Shinozaki K."/>
        </authorList>
    </citation>
    <scope>NUCLEOTIDE SEQUENCE [LARGE SCALE MRNA]</scope>
    <source>
        <strain>cv. Columbia</strain>
    </source>
</reference>
<reference key="5">
    <citation type="journal article" date="2002" name="Plant Physiol.">
        <title>Leaf senescence and starvation-induced chlorosis are accelerated by the disruption of an Arabidopsis autophagy gene.</title>
        <authorList>
            <person name="Hanaoka H."/>
            <person name="Noda T."/>
            <person name="Shirano Y."/>
            <person name="Kato T."/>
            <person name="Hayashi H."/>
            <person name="Shibata D."/>
            <person name="Tabata S."/>
            <person name="Ohsumi Y."/>
        </authorList>
    </citation>
    <scope>GENE FAMILY</scope>
    <scope>NOMENCLATURE</scope>
</reference>
<reference key="6">
    <citation type="journal article" date="2009" name="J. Proteomics">
        <title>Phosphoproteomic analysis of nuclei-enriched fractions from Arabidopsis thaliana.</title>
        <authorList>
            <person name="Jones A.M.E."/>
            <person name="MacLean D."/>
            <person name="Studholme D.J."/>
            <person name="Serna-Sanz A."/>
            <person name="Andreasson E."/>
            <person name="Rathjen J.P."/>
            <person name="Peck S.C."/>
        </authorList>
    </citation>
    <scope>PHOSPHORYLATION [LARGE SCALE ANALYSIS] AT SER-248</scope>
    <scope>IDENTIFICATION BY MASS SPECTROMETRY [LARGE SCALE ANALYSIS]</scope>
    <source>
        <strain>cv. Columbia</strain>
    </source>
</reference>
<reference key="7">
    <citation type="journal article" date="2009" name="Plant Physiol.">
        <title>Large-scale Arabidopsis phosphoproteome profiling reveals novel chloroplast kinase substrates and phosphorylation networks.</title>
        <authorList>
            <person name="Reiland S."/>
            <person name="Messerli G."/>
            <person name="Baerenfaller K."/>
            <person name="Gerrits B."/>
            <person name="Endler A."/>
            <person name="Grossmann J."/>
            <person name="Gruissem W."/>
            <person name="Baginsky S."/>
        </authorList>
    </citation>
    <scope>PHOSPHORYLATION [LARGE SCALE ANALYSIS] AT SER-248</scope>
    <scope>IDENTIFICATION BY MASS SPECTROMETRY [LARGE SCALE ANALYSIS]</scope>
</reference>
<reference key="8">
    <citation type="journal article" date="2011" name="Plant Cell">
        <title>The ATG1/ATG13 protein kinase complex is both a regulator and a target of autophagic recycling in Arabidopsis.</title>
        <authorList>
            <person name="Suttangkakul A."/>
            <person name="Li F."/>
            <person name="Chung T."/>
            <person name="Vierstra R.D."/>
        </authorList>
    </citation>
    <scope>FUNCTION</scope>
    <scope>INTERACTION WITH ATG1A</scope>
    <scope>SUBCELLULAR LOCATION</scope>
    <scope>PHOSPHORYLATION</scope>
    <scope>DISRUPTION PHENOTYPE</scope>
</reference>
<reference key="9">
    <citation type="journal article" date="2014" name="Plant Cell">
        <title>AUTOPHAGY-RELATED11 plays a critical role in general autophagy- and senescence-induced mitophagy in Arabidopsis.</title>
        <authorList>
            <person name="Li F."/>
            <person name="Chung T."/>
            <person name="Vierstra R.D."/>
        </authorList>
    </citation>
    <scope>INTERACTION WITH ATG11 AND ATG101</scope>
</reference>
<proteinExistence type="evidence at protein level"/>
<organism>
    <name type="scientific">Arabidopsis thaliana</name>
    <name type="common">Mouse-ear cress</name>
    <dbReference type="NCBI Taxonomy" id="3702"/>
    <lineage>
        <taxon>Eukaryota</taxon>
        <taxon>Viridiplantae</taxon>
        <taxon>Streptophyta</taxon>
        <taxon>Embryophyta</taxon>
        <taxon>Tracheophyta</taxon>
        <taxon>Spermatophyta</taxon>
        <taxon>Magnoliopsida</taxon>
        <taxon>eudicotyledons</taxon>
        <taxon>Gunneridae</taxon>
        <taxon>Pentapetalae</taxon>
        <taxon>rosids</taxon>
        <taxon>malvids</taxon>
        <taxon>Brassicales</taxon>
        <taxon>Brassicaceae</taxon>
        <taxon>Camelineae</taxon>
        <taxon>Arabidopsis</taxon>
    </lineage>
</organism>
<keyword id="KW-0025">Alternative splicing</keyword>
<keyword id="KW-0072">Autophagy</keyword>
<keyword id="KW-0968">Cytoplasmic vesicle</keyword>
<keyword id="KW-0597">Phosphoprotein</keyword>
<keyword id="KW-0653">Protein transport</keyword>
<keyword id="KW-1185">Reference proteome</keyword>
<keyword id="KW-0813">Transport</keyword>
<accession>Q9SCK0</accession>
<sequence length="603" mass="66564">MDFPENLPSDIGRLEQIVSHFFPKALHIVLNSRIPSLQSRGRTRERLSGLNVRKSDKWFNLVMGDRPAALEKLHSWHRNILDSMIIDIILVHPISNDNLDDDDDHSDSVVRSAETVIERWVVQYENPLIMSPQSSDSATRYQKVYKKSIILLRSLYAQTRLLPAYRVSRQLSSSLASSGYDLIYKVSSFSDIFSGPVTETMKEFRFAPVEVPPGRLCASVTYRSDLSDFNLGAHITLPPRIITDYVGSPATDPMRFFPSPGRSVEGHSFTGRAGRPPLTGSSAERPHSWTSGFHRPPAQFATPNQSFSPAQSHQLSPGLHDFHWSRTDAFGDNHQLSPPFSPSGSPSTPRYISGGNSPRINVRPGTAPVTIPSSATLNRYVSSNFSEPGRNPLPPFSPKSTRRSPSSQDSLPGIALYRSSRSGESPSGLMNQYPTQKLSKDSKYDSGRFSGVLSSSDSPRFAFSRSPSRLSSQDDLDDPDCSCPFDFDDVDESGLQYSHSLDRRKTSSSISQSLPLGRRSSQDAAVGVLVHMLKTAPPLRQDSSTYMASMSGVQREGSVSGTESEFSMARSTSDALEELRNYKQLKDLLLSKSKSGSGPTRVH</sequence>
<feature type="chain" id="PRO_0000434626" description="Autophagy-related protein 13a">
    <location>
        <begin position="1"/>
        <end position="603"/>
    </location>
</feature>
<feature type="region of interest" description="Disordered" evidence="1">
    <location>
        <begin position="258"/>
        <end position="477"/>
    </location>
</feature>
<feature type="region of interest" description="Disordered" evidence="1">
    <location>
        <begin position="498"/>
        <end position="518"/>
    </location>
</feature>
<feature type="compositionally biased region" description="Polar residues" evidence="1">
    <location>
        <begin position="301"/>
        <end position="315"/>
    </location>
</feature>
<feature type="compositionally biased region" description="Basic and acidic residues" evidence="1">
    <location>
        <begin position="320"/>
        <end position="331"/>
    </location>
</feature>
<feature type="compositionally biased region" description="Polar residues" evidence="1">
    <location>
        <begin position="371"/>
        <end position="386"/>
    </location>
</feature>
<feature type="compositionally biased region" description="Polar residues" evidence="1">
    <location>
        <begin position="419"/>
        <end position="437"/>
    </location>
</feature>
<feature type="compositionally biased region" description="Low complexity" evidence="1">
    <location>
        <begin position="453"/>
        <end position="473"/>
    </location>
</feature>
<feature type="modified residue" description="Phosphoserine" evidence="9 10">
    <location>
        <position position="248"/>
    </location>
</feature>
<gene>
    <name evidence="5" type="primary">ATG13A</name>
    <name evidence="7" type="ordered locus">At3g49590</name>
    <name evidence="8" type="ORF">T9C5.180</name>
</gene>
<evidence type="ECO:0000256" key="1">
    <source>
        <dbReference type="SAM" id="MobiDB-lite"/>
    </source>
</evidence>
<evidence type="ECO:0000269" key="2">
    <source>
    </source>
</evidence>
<evidence type="ECO:0000269" key="3">
    <source>
    </source>
</evidence>
<evidence type="ECO:0000303" key="4">
    <source>
    </source>
</evidence>
<evidence type="ECO:0000303" key="5">
    <source>
    </source>
</evidence>
<evidence type="ECO:0000305" key="6"/>
<evidence type="ECO:0000312" key="7">
    <source>
        <dbReference type="Araport" id="AT3G49590"/>
    </source>
</evidence>
<evidence type="ECO:0000312" key="8">
    <source>
        <dbReference type="EMBL" id="CAB62463.1"/>
    </source>
</evidence>
<evidence type="ECO:0007744" key="9">
    <source>
    </source>
</evidence>
<evidence type="ECO:0007744" key="10">
    <source>
    </source>
</evidence>
<dbReference type="EMBL" id="AL132964">
    <property type="protein sequence ID" value="CAB62463.1"/>
    <property type="molecule type" value="Genomic_DNA"/>
</dbReference>
<dbReference type="EMBL" id="CP002686">
    <property type="protein sequence ID" value="AEE78561.1"/>
    <property type="molecule type" value="Genomic_DNA"/>
</dbReference>
<dbReference type="EMBL" id="CP002686">
    <property type="protein sequence ID" value="AEE78562.1"/>
    <property type="molecule type" value="Genomic_DNA"/>
</dbReference>
<dbReference type="EMBL" id="AK316744">
    <property type="protein sequence ID" value="BAH19467.1"/>
    <property type="molecule type" value="mRNA"/>
</dbReference>
<dbReference type="EMBL" id="AK227226">
    <property type="protein sequence ID" value="BAE99263.1"/>
    <property type="molecule type" value="mRNA"/>
</dbReference>
<dbReference type="PIR" id="T46236">
    <property type="entry name" value="T46236"/>
</dbReference>
<dbReference type="RefSeq" id="NP_190528.1">
    <molecule id="Q9SCK0-1"/>
    <property type="nucleotide sequence ID" value="NM_114819.3"/>
</dbReference>
<dbReference type="RefSeq" id="NP_850673.1">
    <molecule id="Q9SCK0-1"/>
    <property type="nucleotide sequence ID" value="NM_180342.1"/>
</dbReference>
<dbReference type="SMR" id="Q9SCK0"/>
<dbReference type="FunCoup" id="Q9SCK0">
    <property type="interactions" value="425"/>
</dbReference>
<dbReference type="IntAct" id="Q9SCK0">
    <property type="interactions" value="1"/>
</dbReference>
<dbReference type="STRING" id="3702.Q9SCK0"/>
<dbReference type="TCDB" id="9.A.15.3.1">
    <property type="family name" value="the autophagy-related phagophore-formation transporter (apt) family"/>
</dbReference>
<dbReference type="iPTMnet" id="Q9SCK0"/>
<dbReference type="PaxDb" id="3702-AT3G49590.3"/>
<dbReference type="EnsemblPlants" id="AT3G49590.1">
    <molecule id="Q9SCK0-1"/>
    <property type="protein sequence ID" value="AT3G49590.1"/>
    <property type="gene ID" value="AT3G49590"/>
</dbReference>
<dbReference type="EnsemblPlants" id="AT3G49590.2">
    <molecule id="Q9SCK0-1"/>
    <property type="protein sequence ID" value="AT3G49590.2"/>
    <property type="gene ID" value="AT3G49590"/>
</dbReference>
<dbReference type="Gramene" id="AT3G49590.1">
    <molecule id="Q9SCK0-1"/>
    <property type="protein sequence ID" value="AT3G49590.1"/>
    <property type="gene ID" value="AT3G49590"/>
</dbReference>
<dbReference type="Gramene" id="AT3G49590.2">
    <molecule id="Q9SCK0-1"/>
    <property type="protein sequence ID" value="AT3G49590.2"/>
    <property type="gene ID" value="AT3G49590"/>
</dbReference>
<dbReference type="KEGG" id="ath:AT3G49590"/>
<dbReference type="Araport" id="AT3G49590"/>
<dbReference type="TAIR" id="AT3G49590">
    <property type="gene designation" value="ATG13A"/>
</dbReference>
<dbReference type="eggNOG" id="KOG4573">
    <property type="taxonomic scope" value="Eukaryota"/>
</dbReference>
<dbReference type="HOGENOM" id="CLU_030687_1_0_1"/>
<dbReference type="InParanoid" id="Q9SCK0"/>
<dbReference type="OMA" id="HSWTSGI"/>
<dbReference type="PhylomeDB" id="Q9SCK0"/>
<dbReference type="PRO" id="PR:Q9SCK0"/>
<dbReference type="Proteomes" id="UP000006548">
    <property type="component" value="Chromosome 3"/>
</dbReference>
<dbReference type="ExpressionAtlas" id="Q9SCK0">
    <property type="expression patterns" value="baseline and differential"/>
</dbReference>
<dbReference type="GO" id="GO:1990316">
    <property type="term" value="C:Atg1/ULK1 kinase complex"/>
    <property type="evidence" value="ECO:0007669"/>
    <property type="project" value="InterPro"/>
</dbReference>
<dbReference type="GO" id="GO:0005776">
    <property type="term" value="C:autophagosome"/>
    <property type="evidence" value="ECO:0000314"/>
    <property type="project" value="UniProtKB"/>
</dbReference>
<dbReference type="GO" id="GO:0031410">
    <property type="term" value="C:cytoplasmic vesicle"/>
    <property type="evidence" value="ECO:0007669"/>
    <property type="project" value="UniProtKB-KW"/>
</dbReference>
<dbReference type="GO" id="GO:0000045">
    <property type="term" value="P:autophagosome assembly"/>
    <property type="evidence" value="ECO:0007669"/>
    <property type="project" value="InterPro"/>
</dbReference>
<dbReference type="GO" id="GO:0006914">
    <property type="term" value="P:autophagy"/>
    <property type="evidence" value="ECO:0000314"/>
    <property type="project" value="UniProtKB"/>
</dbReference>
<dbReference type="GO" id="GO:0015031">
    <property type="term" value="P:protein transport"/>
    <property type="evidence" value="ECO:0007669"/>
    <property type="project" value="UniProtKB-KW"/>
</dbReference>
<dbReference type="FunFam" id="3.30.900.10:FF:000007">
    <property type="entry name" value="Autophagy-related protein 13a"/>
    <property type="match status" value="1"/>
</dbReference>
<dbReference type="Gene3D" id="3.30.900.10">
    <property type="entry name" value="HORMA domain"/>
    <property type="match status" value="1"/>
</dbReference>
<dbReference type="InterPro" id="IPR040182">
    <property type="entry name" value="ATG13"/>
</dbReference>
<dbReference type="InterPro" id="IPR018731">
    <property type="entry name" value="Atg13_N"/>
</dbReference>
<dbReference type="InterPro" id="IPR036570">
    <property type="entry name" value="HORMA_dom_sf"/>
</dbReference>
<dbReference type="PANTHER" id="PTHR13430">
    <property type="match status" value="1"/>
</dbReference>
<dbReference type="PANTHER" id="PTHR13430:SF4">
    <property type="entry name" value="AUTOPHAGY-RELATED PROTEIN 13"/>
    <property type="match status" value="1"/>
</dbReference>
<dbReference type="Pfam" id="PF10033">
    <property type="entry name" value="ATG13"/>
    <property type="match status" value="1"/>
</dbReference>
<protein>
    <recommendedName>
        <fullName evidence="4">Autophagy-related protein 13a</fullName>
        <shortName evidence="4">AtAPG13a</shortName>
    </recommendedName>
</protein>
<name>AT13A_ARATH</name>